<accession>A6QQC6</accession>
<evidence type="ECO:0000250" key="1"/>
<evidence type="ECO:0000250" key="2">
    <source>
        <dbReference type="UniProtKB" id="A8MVW5"/>
    </source>
</evidence>
<evidence type="ECO:0000255" key="3"/>
<evidence type="ECO:0000255" key="4">
    <source>
        <dbReference type="PROSITE-ProRule" id="PRU00114"/>
    </source>
</evidence>
<evidence type="ECO:0000256" key="5">
    <source>
        <dbReference type="SAM" id="MobiDB-lite"/>
    </source>
</evidence>
<proteinExistence type="evidence at transcript level"/>
<sequence length="491" mass="54561">MWLRVFTAFLSFTAGACSGLKVAVPSHTVHGIRGQALYLPVHYGFHTPASDIQVIWLFERPHTMPKYLLGSVNKSVVPDLEYQHKFTMMPPNASLLINPLQFTDEGNYIVKVNIQGNGTLSASQKIQVTVDDPVTKPVVQIQPSSGAVEYVGNMTLTCLVEGGSRRVYQWLKNGRPVHTSSTNSFSLQNSSLHIAPVTKEDIGNYSCLVKNPVSRMESDIIMPTIYYGPYGLRVNSDRGLKVGEVFTVDIGEAILFDCSADSYPPNTYSWIQRTNNATYVIKHGPRLEVASEKIAQKTTDYMCCAYNNITGRRDETHFTVIITSVGIEKLAQKGKSLSPLASITGISLFLIISMCLLFLWKKFQPYKVIKQKLEGRPETEYRKARTFSGHEDALDDFGIYEFVAFPDASGVARMPARSVPACDGVPGQDLHSTIYEVIHHIPAQQQDHPESSSQDGEEDACLDRHDEAGLQELGHCKEQDKGKHSRAKQCI</sequence>
<gene>
    <name type="primary">HEPACAM2</name>
    <name type="synonym">MIKI</name>
</gene>
<name>HECA2_BOVIN</name>
<comment type="function">
    <text evidence="1">Required during prometaphase for centrosome maturation. Following poly-ADP-ribosylation (PARsylation) by TNKS, translocates from the Golgi apparatus to mitotic centrosomes and plays a key role in the formation of robust microtubules for prompt movement of chromosomes: anchors AKAP9/CG-NAP, a scaffold protein of the gamma-tubulin ring complex and promotes centrosome maturation (By similarity).</text>
</comment>
<comment type="subcellular location">
    <subcellularLocation>
        <location evidence="2">Golgi apparatus membrane</location>
        <topology evidence="3">Single-pass type I membrane protein</topology>
    </subcellularLocation>
    <subcellularLocation>
        <location evidence="2">Cytoplasm</location>
        <location evidence="2">Cytoskeleton</location>
        <location evidence="2">Spindle</location>
    </subcellularLocation>
    <subcellularLocation>
        <location evidence="2">Cytoplasm</location>
        <location evidence="2">Cytoskeleton</location>
        <location evidence="2">Microtubule organizing center</location>
        <location evidence="2">Centrosome</location>
    </subcellularLocation>
    <subcellularLocation>
        <location evidence="2">Midbody</location>
    </subcellularLocation>
    <text evidence="2">In interphase, localizes to the Golgi apparatus. Localizes to centrosomes and spindles during prophase, prometaphase, and metaphase of mitosis, and to midbodies at telophase. Translocation to mitotic centrosomes is the result of poly-ADP-ribosylation (PARsylation).</text>
</comment>
<comment type="PTM">
    <text evidence="1">Poly-ADP-ribosylated (PARsylated) by tankyrase TNKS during late G2 and prophase, leading to translocation to mitotic centrosomes.</text>
</comment>
<comment type="PTM">
    <text evidence="1">N-glycosylated.</text>
</comment>
<reference key="1">
    <citation type="submission" date="2007-07" db="EMBL/GenBank/DDBJ databases">
        <authorList>
            <consortium name="NIH - Mammalian Gene Collection (MGC) project"/>
        </authorList>
    </citation>
    <scope>NUCLEOTIDE SEQUENCE [LARGE SCALE MRNA]</scope>
    <source>
        <strain>Hereford</strain>
        <tissue>Ascending colon</tissue>
    </source>
</reference>
<dbReference type="EMBL" id="BC149765">
    <property type="protein sequence ID" value="AAI49766.1"/>
    <property type="molecule type" value="mRNA"/>
</dbReference>
<dbReference type="RefSeq" id="NP_001095444.1">
    <property type="nucleotide sequence ID" value="NM_001101974.1"/>
</dbReference>
<dbReference type="FunCoup" id="A6QQC6">
    <property type="interactions" value="68"/>
</dbReference>
<dbReference type="STRING" id="9913.ENSBTAP00000016529"/>
<dbReference type="GlyCosmos" id="A6QQC6">
    <property type="glycosylation" value="4 sites, No reported glycans"/>
</dbReference>
<dbReference type="GlyGen" id="A6QQC6">
    <property type="glycosylation" value="4 sites"/>
</dbReference>
<dbReference type="PaxDb" id="9913-ENSBTAP00000016529"/>
<dbReference type="GeneID" id="513430"/>
<dbReference type="KEGG" id="bta:513430"/>
<dbReference type="CTD" id="253012"/>
<dbReference type="VEuPathDB" id="HostDB:ENSBTAG00000012456"/>
<dbReference type="eggNOG" id="ENOG502QRJQ">
    <property type="taxonomic scope" value="Eukaryota"/>
</dbReference>
<dbReference type="HOGENOM" id="CLU_049122_0_0_1"/>
<dbReference type="InParanoid" id="A6QQC6"/>
<dbReference type="OrthoDB" id="9872799at2759"/>
<dbReference type="TreeFam" id="TF331199"/>
<dbReference type="Proteomes" id="UP000009136">
    <property type="component" value="Chromosome 4"/>
</dbReference>
<dbReference type="Bgee" id="ENSBTAG00000012456">
    <property type="expression patterns" value="Expressed in ascending colon and 76 other cell types or tissues"/>
</dbReference>
<dbReference type="GO" id="GO:0005813">
    <property type="term" value="C:centrosome"/>
    <property type="evidence" value="ECO:0000250"/>
    <property type="project" value="UniProtKB"/>
</dbReference>
<dbReference type="GO" id="GO:0005794">
    <property type="term" value="C:Golgi apparatus"/>
    <property type="evidence" value="ECO:0000250"/>
    <property type="project" value="UniProtKB"/>
</dbReference>
<dbReference type="GO" id="GO:0000139">
    <property type="term" value="C:Golgi membrane"/>
    <property type="evidence" value="ECO:0007669"/>
    <property type="project" value="UniProtKB-SubCell"/>
</dbReference>
<dbReference type="GO" id="GO:0030496">
    <property type="term" value="C:midbody"/>
    <property type="evidence" value="ECO:0000250"/>
    <property type="project" value="UniProtKB"/>
</dbReference>
<dbReference type="GO" id="GO:0005819">
    <property type="term" value="C:spindle"/>
    <property type="evidence" value="ECO:0000250"/>
    <property type="project" value="UniProtKB"/>
</dbReference>
<dbReference type="GO" id="GO:0051301">
    <property type="term" value="P:cell division"/>
    <property type="evidence" value="ECO:0007669"/>
    <property type="project" value="UniProtKB-KW"/>
</dbReference>
<dbReference type="GO" id="GO:0007098">
    <property type="term" value="P:centrosome cycle"/>
    <property type="evidence" value="ECO:0000250"/>
    <property type="project" value="UniProtKB"/>
</dbReference>
<dbReference type="CDD" id="cd00096">
    <property type="entry name" value="Ig"/>
    <property type="match status" value="1"/>
</dbReference>
<dbReference type="FunFam" id="2.60.40.10:FF:000483">
    <property type="entry name" value="HEPACAM family member 2 isoform X1"/>
    <property type="match status" value="1"/>
</dbReference>
<dbReference type="FunFam" id="2.60.40.10:FF:000624">
    <property type="entry name" value="HEPACAM family member 2 isoform X1"/>
    <property type="match status" value="1"/>
</dbReference>
<dbReference type="FunFam" id="2.60.40.10:FF:000506">
    <property type="entry name" value="HEPACAM family member 2 isoform X2"/>
    <property type="match status" value="1"/>
</dbReference>
<dbReference type="Gene3D" id="2.60.40.10">
    <property type="entry name" value="Immunoglobulins"/>
    <property type="match status" value="3"/>
</dbReference>
<dbReference type="InterPro" id="IPR052280">
    <property type="entry name" value="HEPACAM_domain"/>
</dbReference>
<dbReference type="InterPro" id="IPR007110">
    <property type="entry name" value="Ig-like_dom"/>
</dbReference>
<dbReference type="InterPro" id="IPR036179">
    <property type="entry name" value="Ig-like_dom_sf"/>
</dbReference>
<dbReference type="InterPro" id="IPR013783">
    <property type="entry name" value="Ig-like_fold"/>
</dbReference>
<dbReference type="InterPro" id="IPR003599">
    <property type="entry name" value="Ig_sub"/>
</dbReference>
<dbReference type="InterPro" id="IPR003598">
    <property type="entry name" value="Ig_sub2"/>
</dbReference>
<dbReference type="PANTHER" id="PTHR44888:SF1">
    <property type="entry name" value="HEPACAM FAMILY MEMBER 2"/>
    <property type="match status" value="1"/>
</dbReference>
<dbReference type="PANTHER" id="PTHR44888">
    <property type="entry name" value="HEPACAM FAMILY MEMBER 2-RELATED"/>
    <property type="match status" value="1"/>
</dbReference>
<dbReference type="Pfam" id="PF13927">
    <property type="entry name" value="Ig_3"/>
    <property type="match status" value="1"/>
</dbReference>
<dbReference type="SMART" id="SM00409">
    <property type="entry name" value="IG"/>
    <property type="match status" value="3"/>
</dbReference>
<dbReference type="SMART" id="SM00408">
    <property type="entry name" value="IGc2"/>
    <property type="match status" value="1"/>
</dbReference>
<dbReference type="SUPFAM" id="SSF48726">
    <property type="entry name" value="Immunoglobulin"/>
    <property type="match status" value="3"/>
</dbReference>
<dbReference type="PROSITE" id="PS50835">
    <property type="entry name" value="IG_LIKE"/>
    <property type="match status" value="2"/>
</dbReference>
<protein>
    <recommendedName>
        <fullName>HEPACAM family member 2</fullName>
    </recommendedName>
    <alternativeName>
        <fullName>Mitotic kinetics regulator</fullName>
    </alternativeName>
</protein>
<organism>
    <name type="scientific">Bos taurus</name>
    <name type="common">Bovine</name>
    <dbReference type="NCBI Taxonomy" id="9913"/>
    <lineage>
        <taxon>Eukaryota</taxon>
        <taxon>Metazoa</taxon>
        <taxon>Chordata</taxon>
        <taxon>Craniata</taxon>
        <taxon>Vertebrata</taxon>
        <taxon>Euteleostomi</taxon>
        <taxon>Mammalia</taxon>
        <taxon>Eutheria</taxon>
        <taxon>Laurasiatheria</taxon>
        <taxon>Artiodactyla</taxon>
        <taxon>Ruminantia</taxon>
        <taxon>Pecora</taxon>
        <taxon>Bovidae</taxon>
        <taxon>Bovinae</taxon>
        <taxon>Bos</taxon>
    </lineage>
</organism>
<keyword id="KW-0013">ADP-ribosylation</keyword>
<keyword id="KW-0131">Cell cycle</keyword>
<keyword id="KW-0132">Cell division</keyword>
<keyword id="KW-0963">Cytoplasm</keyword>
<keyword id="KW-0206">Cytoskeleton</keyword>
<keyword id="KW-1015">Disulfide bond</keyword>
<keyword id="KW-0325">Glycoprotein</keyword>
<keyword id="KW-0333">Golgi apparatus</keyword>
<keyword id="KW-0393">Immunoglobulin domain</keyword>
<keyword id="KW-0472">Membrane</keyword>
<keyword id="KW-0498">Mitosis</keyword>
<keyword id="KW-1185">Reference proteome</keyword>
<keyword id="KW-0677">Repeat</keyword>
<keyword id="KW-0732">Signal</keyword>
<keyword id="KW-0812">Transmembrane</keyword>
<keyword id="KW-1133">Transmembrane helix</keyword>
<feature type="signal peptide" evidence="3">
    <location>
        <begin position="1"/>
        <end position="18"/>
    </location>
</feature>
<feature type="chain" id="PRO_0000332219" description="HEPACAM family member 2">
    <location>
        <begin position="19"/>
        <end position="491"/>
    </location>
</feature>
<feature type="transmembrane region" description="Helical" evidence="3">
    <location>
        <begin position="340"/>
        <end position="360"/>
    </location>
</feature>
<feature type="topological domain" description="Cytoplasmic" evidence="3">
    <location>
        <begin position="361"/>
        <end position="491"/>
    </location>
</feature>
<feature type="domain" description="Ig-like C2-type 1">
    <location>
        <begin position="137"/>
        <end position="221"/>
    </location>
</feature>
<feature type="domain" description="Ig-like C2-type 2">
    <location>
        <begin position="223"/>
        <end position="319"/>
    </location>
</feature>
<feature type="region of interest" description="Disordered" evidence="5">
    <location>
        <begin position="444"/>
        <end position="466"/>
    </location>
</feature>
<feature type="region of interest" description="Disordered" evidence="5">
    <location>
        <begin position="472"/>
        <end position="491"/>
    </location>
</feature>
<feature type="compositionally biased region" description="Polar residues" evidence="5">
    <location>
        <begin position="444"/>
        <end position="454"/>
    </location>
</feature>
<feature type="compositionally biased region" description="Basic and acidic residues" evidence="5">
    <location>
        <begin position="472"/>
        <end position="482"/>
    </location>
</feature>
<feature type="glycosylation site" description="N-linked (GlcNAc...) asparagine" evidence="3">
    <location>
        <position position="73"/>
    </location>
</feature>
<feature type="glycosylation site" description="N-linked (GlcNAc...) asparagine" evidence="3">
    <location>
        <position position="117"/>
    </location>
</feature>
<feature type="glycosylation site" description="N-linked (GlcNAc...) asparagine" evidence="3">
    <location>
        <position position="153"/>
    </location>
</feature>
<feature type="glycosylation site" description="N-linked (GlcNAc...) asparagine" evidence="3">
    <location>
        <position position="308"/>
    </location>
</feature>
<feature type="disulfide bond" evidence="4">
    <location>
        <begin position="158"/>
        <end position="207"/>
    </location>
</feature>
<feature type="disulfide bond" evidence="4">
    <location>
        <begin position="258"/>
        <end position="303"/>
    </location>
</feature>